<dbReference type="EC" id="2.8.4.4" evidence="1"/>
<dbReference type="EMBL" id="CP000141">
    <property type="protein sequence ID" value="ABB14537.1"/>
    <property type="molecule type" value="Genomic_DNA"/>
</dbReference>
<dbReference type="RefSeq" id="WP_011344085.1">
    <property type="nucleotide sequence ID" value="NC_007503.1"/>
</dbReference>
<dbReference type="SMR" id="Q3ACX5"/>
<dbReference type="STRING" id="246194.CHY_1164"/>
<dbReference type="KEGG" id="chy:CHY_1164"/>
<dbReference type="eggNOG" id="COG0621">
    <property type="taxonomic scope" value="Bacteria"/>
</dbReference>
<dbReference type="HOGENOM" id="CLU_018697_0_1_9"/>
<dbReference type="InParanoid" id="Q3ACX5"/>
<dbReference type="OrthoDB" id="9805215at2"/>
<dbReference type="Proteomes" id="UP000002706">
    <property type="component" value="Chromosome"/>
</dbReference>
<dbReference type="GO" id="GO:0005829">
    <property type="term" value="C:cytosol"/>
    <property type="evidence" value="ECO:0007669"/>
    <property type="project" value="TreeGrafter"/>
</dbReference>
<dbReference type="GO" id="GO:0051539">
    <property type="term" value="F:4 iron, 4 sulfur cluster binding"/>
    <property type="evidence" value="ECO:0007669"/>
    <property type="project" value="UniProtKB-UniRule"/>
</dbReference>
<dbReference type="GO" id="GO:0035599">
    <property type="term" value="F:aspartic acid methylthiotransferase activity"/>
    <property type="evidence" value="ECO:0007669"/>
    <property type="project" value="TreeGrafter"/>
</dbReference>
<dbReference type="GO" id="GO:0046872">
    <property type="term" value="F:metal ion binding"/>
    <property type="evidence" value="ECO:0007669"/>
    <property type="project" value="UniProtKB-KW"/>
</dbReference>
<dbReference type="GO" id="GO:0103039">
    <property type="term" value="F:protein methylthiotransferase activity"/>
    <property type="evidence" value="ECO:0007669"/>
    <property type="project" value="UniProtKB-EC"/>
</dbReference>
<dbReference type="GO" id="GO:0006400">
    <property type="term" value="P:tRNA modification"/>
    <property type="evidence" value="ECO:0007669"/>
    <property type="project" value="InterPro"/>
</dbReference>
<dbReference type="CDD" id="cd01335">
    <property type="entry name" value="Radical_SAM"/>
    <property type="match status" value="1"/>
</dbReference>
<dbReference type="FunFam" id="3.40.50.12160:FF:000003">
    <property type="entry name" value="CDK5 regulatory subunit-associated protein 1"/>
    <property type="match status" value="1"/>
</dbReference>
<dbReference type="FunFam" id="3.80.30.20:FF:000001">
    <property type="entry name" value="tRNA-2-methylthio-N(6)-dimethylallyladenosine synthase 2"/>
    <property type="match status" value="1"/>
</dbReference>
<dbReference type="Gene3D" id="3.40.50.12160">
    <property type="entry name" value="Methylthiotransferase, N-terminal domain"/>
    <property type="match status" value="1"/>
</dbReference>
<dbReference type="Gene3D" id="2.40.50.140">
    <property type="entry name" value="Nucleic acid-binding proteins"/>
    <property type="match status" value="1"/>
</dbReference>
<dbReference type="Gene3D" id="3.80.30.20">
    <property type="entry name" value="tm_1862 like domain"/>
    <property type="match status" value="1"/>
</dbReference>
<dbReference type="HAMAP" id="MF_01865">
    <property type="entry name" value="MTTase_RimO"/>
    <property type="match status" value="1"/>
</dbReference>
<dbReference type="InterPro" id="IPR006638">
    <property type="entry name" value="Elp3/MiaA/NifB-like_rSAM"/>
</dbReference>
<dbReference type="InterPro" id="IPR005839">
    <property type="entry name" value="Methylthiotransferase"/>
</dbReference>
<dbReference type="InterPro" id="IPR020612">
    <property type="entry name" value="Methylthiotransferase_CS"/>
</dbReference>
<dbReference type="InterPro" id="IPR013848">
    <property type="entry name" value="Methylthiotransferase_N"/>
</dbReference>
<dbReference type="InterPro" id="IPR038135">
    <property type="entry name" value="Methylthiotransferase_N_sf"/>
</dbReference>
<dbReference type="InterPro" id="IPR012340">
    <property type="entry name" value="NA-bd_OB-fold"/>
</dbReference>
<dbReference type="InterPro" id="IPR005840">
    <property type="entry name" value="Ribosomal_uS12_MeSTrfase_RimO"/>
</dbReference>
<dbReference type="InterPro" id="IPR007197">
    <property type="entry name" value="rSAM"/>
</dbReference>
<dbReference type="InterPro" id="IPR023404">
    <property type="entry name" value="rSAM_horseshoe"/>
</dbReference>
<dbReference type="InterPro" id="IPR002792">
    <property type="entry name" value="TRAM_dom"/>
</dbReference>
<dbReference type="NCBIfam" id="TIGR01125">
    <property type="entry name" value="30S ribosomal protein S12 methylthiotransferase RimO"/>
    <property type="match status" value="1"/>
</dbReference>
<dbReference type="NCBIfam" id="TIGR00089">
    <property type="entry name" value="MiaB/RimO family radical SAM methylthiotransferase"/>
    <property type="match status" value="1"/>
</dbReference>
<dbReference type="PANTHER" id="PTHR43837">
    <property type="entry name" value="RIBOSOMAL PROTEIN S12 METHYLTHIOTRANSFERASE RIMO"/>
    <property type="match status" value="1"/>
</dbReference>
<dbReference type="PANTHER" id="PTHR43837:SF1">
    <property type="entry name" value="RIBOSOMAL PROTEIN US12 METHYLTHIOTRANSFERASE RIMO"/>
    <property type="match status" value="1"/>
</dbReference>
<dbReference type="Pfam" id="PF04055">
    <property type="entry name" value="Radical_SAM"/>
    <property type="match status" value="1"/>
</dbReference>
<dbReference type="Pfam" id="PF18693">
    <property type="entry name" value="TRAM_2"/>
    <property type="match status" value="1"/>
</dbReference>
<dbReference type="Pfam" id="PF00919">
    <property type="entry name" value="UPF0004"/>
    <property type="match status" value="1"/>
</dbReference>
<dbReference type="SFLD" id="SFLDG01082">
    <property type="entry name" value="B12-binding_domain_containing"/>
    <property type="match status" value="1"/>
</dbReference>
<dbReference type="SFLD" id="SFLDG01061">
    <property type="entry name" value="methylthiotransferase"/>
    <property type="match status" value="1"/>
</dbReference>
<dbReference type="SFLD" id="SFLDF00274">
    <property type="entry name" value="ribosomal_protein_S12_methylth"/>
    <property type="match status" value="1"/>
</dbReference>
<dbReference type="SMART" id="SM00729">
    <property type="entry name" value="Elp3"/>
    <property type="match status" value="1"/>
</dbReference>
<dbReference type="SUPFAM" id="SSF102114">
    <property type="entry name" value="Radical SAM enzymes"/>
    <property type="match status" value="1"/>
</dbReference>
<dbReference type="PROSITE" id="PS51449">
    <property type="entry name" value="MTTASE_N"/>
    <property type="match status" value="1"/>
</dbReference>
<dbReference type="PROSITE" id="PS01278">
    <property type="entry name" value="MTTASE_RADICAL"/>
    <property type="match status" value="1"/>
</dbReference>
<dbReference type="PROSITE" id="PS51918">
    <property type="entry name" value="RADICAL_SAM"/>
    <property type="match status" value="1"/>
</dbReference>
<dbReference type="PROSITE" id="PS50926">
    <property type="entry name" value="TRAM"/>
    <property type="match status" value="1"/>
</dbReference>
<organism>
    <name type="scientific">Carboxydothermus hydrogenoformans (strain ATCC BAA-161 / DSM 6008 / Z-2901)</name>
    <dbReference type="NCBI Taxonomy" id="246194"/>
    <lineage>
        <taxon>Bacteria</taxon>
        <taxon>Bacillati</taxon>
        <taxon>Bacillota</taxon>
        <taxon>Clostridia</taxon>
        <taxon>Thermoanaerobacterales</taxon>
        <taxon>Thermoanaerobacteraceae</taxon>
        <taxon>Carboxydothermus</taxon>
    </lineage>
</organism>
<gene>
    <name evidence="1" type="primary">rimO</name>
    <name type="ordered locus">CHY_1164</name>
</gene>
<sequence length="438" mass="50192">MKYFILSLGCTKNQADSEVIMGILESKGYVRSLNPEESDLLIVNTCGFIAAAIEESIEEILNLVHLKKPGQKILVAGCLVQREGKELAKHLPEVDLFFTPREINNLDKLLADLGENNKLVLSEPGFLNLEKKPRAKSNEVYRYIKIADGCDNRCTYCTIPAIRGKYTSRPLDDILEEIKDTLKQGIKEIILVAQDTTAYGIDLYGEFKLVELLRKIGSIKGNFWVRLMYLYPDKITPELINEIKENPKVIKYVDVPLQHIHPEILKKMGRKGSSEEIISTLERLRKEIPDITIRTTFIVGFPGETEEQFNYLLDFVKKFKFNRLGAFPYYREKGTPAAKMKGQIPKKVKEQRYEKLMEVQQEISLNLNKALVGKKIPVIVEKKIRGENLYLGRTYMDAPEIDGIIEIKAEKRLKKGQIINVLITDYDIYDLKGEFIND</sequence>
<name>RIMO_CARHZ</name>
<proteinExistence type="inferred from homology"/>
<accession>Q3ACX5</accession>
<reference key="1">
    <citation type="journal article" date="2005" name="PLoS Genet.">
        <title>Life in hot carbon monoxide: the complete genome sequence of Carboxydothermus hydrogenoformans Z-2901.</title>
        <authorList>
            <person name="Wu M."/>
            <person name="Ren Q."/>
            <person name="Durkin A.S."/>
            <person name="Daugherty S.C."/>
            <person name="Brinkac L.M."/>
            <person name="Dodson R.J."/>
            <person name="Madupu R."/>
            <person name="Sullivan S.A."/>
            <person name="Kolonay J.F."/>
            <person name="Nelson W.C."/>
            <person name="Tallon L.J."/>
            <person name="Jones K.M."/>
            <person name="Ulrich L.E."/>
            <person name="Gonzalez J.M."/>
            <person name="Zhulin I.B."/>
            <person name="Robb F.T."/>
            <person name="Eisen J.A."/>
        </authorList>
    </citation>
    <scope>NUCLEOTIDE SEQUENCE [LARGE SCALE GENOMIC DNA]</scope>
    <source>
        <strain>ATCC BAA-161 / DSM 6008 / Z-2901</strain>
    </source>
</reference>
<feature type="chain" id="PRO_0000374758" description="Ribosomal protein uS12 methylthiotransferase RimO">
    <location>
        <begin position="1"/>
        <end position="438"/>
    </location>
</feature>
<feature type="domain" description="MTTase N-terminal" evidence="1">
    <location>
        <begin position="1"/>
        <end position="115"/>
    </location>
</feature>
<feature type="domain" description="Radical SAM core" evidence="2">
    <location>
        <begin position="136"/>
        <end position="366"/>
    </location>
</feature>
<feature type="domain" description="TRAM" evidence="1">
    <location>
        <begin position="369"/>
        <end position="437"/>
    </location>
</feature>
<feature type="binding site" evidence="1">
    <location>
        <position position="10"/>
    </location>
    <ligand>
        <name>[4Fe-4S] cluster</name>
        <dbReference type="ChEBI" id="CHEBI:49883"/>
        <label>1</label>
    </ligand>
</feature>
<feature type="binding site" evidence="1">
    <location>
        <position position="46"/>
    </location>
    <ligand>
        <name>[4Fe-4S] cluster</name>
        <dbReference type="ChEBI" id="CHEBI:49883"/>
        <label>1</label>
    </ligand>
</feature>
<feature type="binding site" evidence="1">
    <location>
        <position position="78"/>
    </location>
    <ligand>
        <name>[4Fe-4S] cluster</name>
        <dbReference type="ChEBI" id="CHEBI:49883"/>
        <label>1</label>
    </ligand>
</feature>
<feature type="binding site" evidence="1">
    <location>
        <position position="150"/>
    </location>
    <ligand>
        <name>[4Fe-4S] cluster</name>
        <dbReference type="ChEBI" id="CHEBI:49883"/>
        <label>2</label>
        <note>4Fe-4S-S-AdoMet</note>
    </ligand>
</feature>
<feature type="binding site" evidence="1">
    <location>
        <position position="154"/>
    </location>
    <ligand>
        <name>[4Fe-4S] cluster</name>
        <dbReference type="ChEBI" id="CHEBI:49883"/>
        <label>2</label>
        <note>4Fe-4S-S-AdoMet</note>
    </ligand>
</feature>
<feature type="binding site" evidence="1">
    <location>
        <position position="157"/>
    </location>
    <ligand>
        <name>[4Fe-4S] cluster</name>
        <dbReference type="ChEBI" id="CHEBI:49883"/>
        <label>2</label>
        <note>4Fe-4S-S-AdoMet</note>
    </ligand>
</feature>
<evidence type="ECO:0000255" key="1">
    <source>
        <dbReference type="HAMAP-Rule" id="MF_01865"/>
    </source>
</evidence>
<evidence type="ECO:0000255" key="2">
    <source>
        <dbReference type="PROSITE-ProRule" id="PRU01266"/>
    </source>
</evidence>
<comment type="function">
    <text evidence="1">Catalyzes the methylthiolation of an aspartic acid residue of ribosomal protein uS12.</text>
</comment>
<comment type="catalytic activity">
    <reaction evidence="1">
        <text>L-aspartate(89)-[ribosomal protein uS12]-hydrogen + (sulfur carrier)-SH + AH2 + 2 S-adenosyl-L-methionine = 3-methylsulfanyl-L-aspartate(89)-[ribosomal protein uS12]-hydrogen + (sulfur carrier)-H + 5'-deoxyadenosine + L-methionine + A + S-adenosyl-L-homocysteine + 2 H(+)</text>
        <dbReference type="Rhea" id="RHEA:37087"/>
        <dbReference type="Rhea" id="RHEA-COMP:10460"/>
        <dbReference type="Rhea" id="RHEA-COMP:10461"/>
        <dbReference type="Rhea" id="RHEA-COMP:14737"/>
        <dbReference type="Rhea" id="RHEA-COMP:14739"/>
        <dbReference type="ChEBI" id="CHEBI:13193"/>
        <dbReference type="ChEBI" id="CHEBI:15378"/>
        <dbReference type="ChEBI" id="CHEBI:17319"/>
        <dbReference type="ChEBI" id="CHEBI:17499"/>
        <dbReference type="ChEBI" id="CHEBI:29917"/>
        <dbReference type="ChEBI" id="CHEBI:29961"/>
        <dbReference type="ChEBI" id="CHEBI:57844"/>
        <dbReference type="ChEBI" id="CHEBI:57856"/>
        <dbReference type="ChEBI" id="CHEBI:59789"/>
        <dbReference type="ChEBI" id="CHEBI:64428"/>
        <dbReference type="ChEBI" id="CHEBI:73599"/>
        <dbReference type="EC" id="2.8.4.4"/>
    </reaction>
</comment>
<comment type="cofactor">
    <cofactor evidence="1">
        <name>[4Fe-4S] cluster</name>
        <dbReference type="ChEBI" id="CHEBI:49883"/>
    </cofactor>
    <text evidence="1">Binds 2 [4Fe-4S] clusters. One cluster is coordinated with 3 cysteines and an exchangeable S-adenosyl-L-methionine.</text>
</comment>
<comment type="subcellular location">
    <subcellularLocation>
        <location evidence="1">Cytoplasm</location>
    </subcellularLocation>
</comment>
<comment type="similarity">
    <text evidence="1">Belongs to the methylthiotransferase family. RimO subfamily.</text>
</comment>
<protein>
    <recommendedName>
        <fullName evidence="1">Ribosomal protein uS12 methylthiotransferase RimO</fullName>
        <shortName evidence="1">uS12 MTTase</shortName>
        <shortName evidence="1">uS12 methylthiotransferase</shortName>
        <ecNumber evidence="1">2.8.4.4</ecNumber>
    </recommendedName>
    <alternativeName>
        <fullName evidence="1">Ribosomal protein uS12 (aspartate-C(3))-methylthiotransferase</fullName>
    </alternativeName>
    <alternativeName>
        <fullName evidence="1">Ribosome maturation factor RimO</fullName>
    </alternativeName>
</protein>
<keyword id="KW-0004">4Fe-4S</keyword>
<keyword id="KW-0963">Cytoplasm</keyword>
<keyword id="KW-0408">Iron</keyword>
<keyword id="KW-0411">Iron-sulfur</keyword>
<keyword id="KW-0479">Metal-binding</keyword>
<keyword id="KW-1185">Reference proteome</keyword>
<keyword id="KW-0949">S-adenosyl-L-methionine</keyword>
<keyword id="KW-0808">Transferase</keyword>